<accession>A0A348HAX8</accession>
<dbReference type="EC" id="5.-.-.-" evidence="8"/>
<dbReference type="EMBL" id="LC086931">
    <property type="protein sequence ID" value="BBG28500.1"/>
    <property type="molecule type" value="Genomic_DNA"/>
</dbReference>
<dbReference type="SMR" id="A0A348HAX8"/>
<dbReference type="GO" id="GO:0016853">
    <property type="term" value="F:isomerase activity"/>
    <property type="evidence" value="ECO:0007669"/>
    <property type="project" value="UniProtKB-KW"/>
</dbReference>
<dbReference type="Gene3D" id="3.10.450.50">
    <property type="match status" value="1"/>
</dbReference>
<dbReference type="InterPro" id="IPR032710">
    <property type="entry name" value="NTF2-like_dom_sf"/>
</dbReference>
<dbReference type="SUPFAM" id="SSF54427">
    <property type="entry name" value="NTF2-like"/>
    <property type="match status" value="1"/>
</dbReference>
<evidence type="ECO:0000255" key="1"/>
<evidence type="ECO:0000255" key="2">
    <source>
        <dbReference type="PROSITE-ProRule" id="PRU00498"/>
    </source>
</evidence>
<evidence type="ECO:0000256" key="3">
    <source>
        <dbReference type="SAM" id="MobiDB-lite"/>
    </source>
</evidence>
<evidence type="ECO:0000269" key="4">
    <source>
    </source>
</evidence>
<evidence type="ECO:0000269" key="5">
    <source>
    </source>
</evidence>
<evidence type="ECO:0000303" key="6">
    <source>
    </source>
</evidence>
<evidence type="ECO:0000305" key="7"/>
<evidence type="ECO:0000305" key="8">
    <source>
    </source>
</evidence>
<feature type="signal peptide" evidence="1">
    <location>
        <begin position="1"/>
        <end position="18"/>
    </location>
</feature>
<feature type="chain" id="PRO_5016939810" description="Dimerizing cyclase phiC" evidence="1">
    <location>
        <begin position="19"/>
        <end position="226"/>
    </location>
</feature>
<feature type="region of interest" description="Disordered" evidence="3">
    <location>
        <begin position="20"/>
        <end position="39"/>
    </location>
</feature>
<feature type="glycosylation site" description="N-linked (GlcNAc...) asparagine" evidence="2">
    <location>
        <position position="141"/>
    </location>
</feature>
<feature type="glycosylation site" description="N-linked (GlcNAc...) asparagine" evidence="2">
    <location>
        <position position="190"/>
    </location>
</feature>
<feature type="glycosylation site" description="N-linked (GlcNAc...) asparagine" evidence="2">
    <location>
        <position position="212"/>
    </location>
</feature>
<sequence>MRLTRSLALLSACTLAAASTQQPLTDSDGHPKPDPPPYEFPLKFDNPRTDCKYVSQPWIADIFKNIANDFADVFKYVAPDVTFRIMGHHPFAGAYSNPKIAYINSLHRLNNCLKDNEVDSKLWAIHGGCDSEWTIMELYFNATTKRGLPWELTSLWVSRWDEDKLLREVRTYVDAGQIMRTLWDNEIWWNSSDRVTHYDIMPGPGGLPPGINASLEVDLSEELQEL</sequence>
<name>PHIC_FUNX7</name>
<gene>
    <name evidence="6" type="primary">phiC</name>
</gene>
<proteinExistence type="evidence at protein level"/>
<organism>
    <name type="scientific">Fungal sp. (strain ATCC 74256)</name>
    <dbReference type="NCBI Taxonomy" id="1729595"/>
    <lineage>
        <taxon>Eukaryota</taxon>
        <taxon>Fungi</taxon>
    </lineage>
</organism>
<reference key="1">
    <citation type="journal article" date="2015" name="Org. Lett.">
        <title>Biosynthetic study on antihypercholesterolemic agent phomoidride: general biogenesis of fungal dimeric anhydrides.</title>
        <authorList>
            <person name="Fujii R."/>
            <person name="Matsu Y."/>
            <person name="Minami A."/>
            <person name="Nagamine S."/>
            <person name="Takeuchi I."/>
            <person name="Gomi K."/>
            <person name="Oikawa H."/>
        </authorList>
    </citation>
    <scope>NUCLEOTIDE SEQUENCE [GENOMIC DNA]</scope>
    <source>
        <strain>ATCC 74256</strain>
    </source>
</reference>
<reference key="2">
    <citation type="journal article" date="1997" name="J. Antibiot.">
        <title>CP-225,917 and CP-263,114, novel Ras farnesylation inhibitors from an unidentified fungus. I. Taxonomy, fermentation, isolation, and biochemical properties.</title>
        <authorList>
            <person name="Dabrah T.T."/>
            <person name="Harwood H.J. Jr."/>
            <person name="Huang L.H."/>
            <person name="Jankovich N.D."/>
            <person name="Kaneko T."/>
            <person name="Li J.C."/>
            <person name="Lindsey S."/>
            <person name="Moshier P.M."/>
            <person name="Subashi T.A."/>
            <person name="Therrien M."/>
            <person name="Watts P.C."/>
        </authorList>
    </citation>
    <scope>BIOTECHNOLOGY</scope>
</reference>
<reference key="3">
    <citation type="journal article" date="2022" name="J. Am. Chem. Soc.">
        <title>Elucidation of late-stage biosynthesis of phomoidride: proposal of cyclization mechanism affording characteristic nine-membered ring of fungal dimeric anhydride.</title>
        <authorList>
            <person name="Yamamoto S."/>
            <person name="Matsuyama T."/>
            <person name="Ozaki T."/>
            <person name="Takino J."/>
            <person name="Sato H."/>
            <person name="Uchiyama M."/>
            <person name="Minami A."/>
            <person name="Oikawa H."/>
        </authorList>
    </citation>
    <scope>FUNCTION</scope>
</reference>
<keyword id="KW-0325">Glycoprotein</keyword>
<keyword id="KW-0413">Isomerase</keyword>
<keyword id="KW-0732">Signal</keyword>
<protein>
    <recommendedName>
        <fullName evidence="6">Dimerizing cyclase phiC</fullName>
        <ecNumber evidence="8">5.-.-.-</ecNumber>
    </recommendedName>
    <alternativeName>
        <fullName evidence="6">Phomoidride biosynthesis cluster protein C</fullName>
    </alternativeName>
</protein>
<comment type="function">
    <text evidence="4 8">Dimerizing cyclase; part of the gene cluster that mediates the biosynthesis of the antihypercholesterolemic agents phomoidrides which are dimeric anhydrides (PubMed:26558485). Within the pathway, phiC produces the bicyclo[4.3.1]deca-1,6-diene core of phomoidrides via the dimerization of the monomeric anhydrides leading to prephomoidride (Probable). The pathway begins with the highly reducing polyketide synthase phiA that catalyzes the formation of a C12-fatty acyl-ACP, starting from one acetate and 5 malonate units. The hydrolase phiM is involved in the release of the C12-fatty acyl chain from phiA. The alkylcitrate synthase (ACS) phiJ and the alkylcitrate dehydratase (ACDH) phiI then give rise to decarboxylated monomeric anhydrides by coupling the C12-fatty acyl chain with oxalacetic acid. The cyclase phiC is responsible for the dimerization of the monomeric anhydrides which leads to the production of prephomoidride that contains the characteristic bicyclo[4.3.1]deca-1,6-diene system of phomoidrides. Iterative oxidation catalyzed by the alpha-ketoglutarate-dependent dioxygenase phiK produced then phomoidride A. Finally, the methyltransferase phiE converts phomoidride A to phomoidride B via an acetalization reaction. The phosphatidylethanolamine-binding protein phiB and phiN are not essential for dimerization and their functions have still to be determined (Probable).</text>
</comment>
<comment type="catalytic activity">
    <reaction evidence="8">
        <text>2 [4-(deca-1,8-diyl)-2,5-dioxo-2,5-dihydro-3-furanyl]acetate + H(+) = 2-[(1R,8S,14R,15R)-11-hydroxy-14,15-bis[(6E)-oct-6-en-1-yl]-3,5,9-trioxo-4,10-dioxatetracyclo[9.4.0.0(2,6).0(8,12)]pentadeca-2(6),12-dien-8-yl]acetate + CO2</text>
        <dbReference type="Rhea" id="RHEA:77651"/>
        <dbReference type="ChEBI" id="CHEBI:15378"/>
        <dbReference type="ChEBI" id="CHEBI:16526"/>
        <dbReference type="ChEBI" id="CHEBI:197420"/>
        <dbReference type="ChEBI" id="CHEBI:197434"/>
    </reaction>
    <physiologicalReaction direction="left-to-right" evidence="8">
        <dbReference type="Rhea" id="RHEA:77652"/>
    </physiologicalReaction>
</comment>
<comment type="pathway">
    <text evidence="8">Secondary metabolite biosynthesis.</text>
</comment>
<comment type="biotechnology">
    <text evidence="5">Phomoidrides A and B (also known as CP-225,917 and CP-263,114) are potent inhibitors of Ras farnesyltransferase and squalene synthase (PubMed:9066758). CP-225,917 and CP-263,114 inhibit Ras farnesyl transferase from rat brain with IC(50) values of 6 uM and 20 uoM, respectively (PubMed:9066758). CP-225,917 inhibits squalene synthase with an IC(50) value of 43 uM and CP-263,114 with an IC(50) of 160 uM (PubMed:9066758).</text>
</comment>
<comment type="similarity">
    <text evidence="7">Belongs to the dimerizing cyclase tstC family.</text>
</comment>